<keyword id="KW-1203">Blood coagulation cascade inhibiting toxin</keyword>
<keyword id="KW-0325">Glycoprotein</keyword>
<keyword id="KW-1199">Hemostasis impairing toxin</keyword>
<keyword id="KW-0964">Secreted</keyword>
<keyword id="KW-0732">Signal</keyword>
<keyword id="KW-0800">Toxin</keyword>
<organism evidence="6">
    <name type="scientific">Triatoma infestans</name>
    <name type="common">Assassin bug</name>
    <dbReference type="NCBI Taxonomy" id="30076"/>
    <lineage>
        <taxon>Eukaryota</taxon>
        <taxon>Metazoa</taxon>
        <taxon>Ecdysozoa</taxon>
        <taxon>Arthropoda</taxon>
        <taxon>Hexapoda</taxon>
        <taxon>Insecta</taxon>
        <taxon>Pterygota</taxon>
        <taxon>Neoptera</taxon>
        <taxon>Paraneoptera</taxon>
        <taxon>Hemiptera</taxon>
        <taxon>Heteroptera</taxon>
        <taxon>Panheteroptera</taxon>
        <taxon>Cimicomorpha</taxon>
        <taxon>Reduviidae</taxon>
        <taxon>Triatominae</taxon>
        <taxon>Triatoma</taxon>
    </lineage>
</organism>
<evidence type="ECO:0000255" key="1"/>
<evidence type="ECO:0000255" key="2">
    <source>
        <dbReference type="PROSITE-ProRule" id="PRU00498"/>
    </source>
</evidence>
<evidence type="ECO:0000269" key="3">
    <source>
    </source>
</evidence>
<evidence type="ECO:0000303" key="4">
    <source>
    </source>
</evidence>
<evidence type="ECO:0000305" key="5"/>
<evidence type="ECO:0000312" key="6">
    <source>
        <dbReference type="EMBL" id="BAF75464.1"/>
    </source>
</evidence>
<dbReference type="EMBL" id="AB292809">
    <property type="protein sequence ID" value="BAF75464.1"/>
    <property type="molecule type" value="mRNA"/>
</dbReference>
<dbReference type="GO" id="GO:0005576">
    <property type="term" value="C:extracellular region"/>
    <property type="evidence" value="ECO:0007669"/>
    <property type="project" value="UniProtKB-SubCell"/>
</dbReference>
<dbReference type="GO" id="GO:0090729">
    <property type="term" value="F:toxin activity"/>
    <property type="evidence" value="ECO:0007669"/>
    <property type="project" value="UniProtKB-KW"/>
</dbReference>
<dbReference type="GO" id="GO:0035899">
    <property type="term" value="P:suppression of blood coagulation in another organism"/>
    <property type="evidence" value="ECO:0000314"/>
    <property type="project" value="UniProtKB"/>
</dbReference>
<dbReference type="GO" id="GO:0030682">
    <property type="term" value="P:symbiont-mediated perturbation of host defenses"/>
    <property type="evidence" value="ECO:0007669"/>
    <property type="project" value="InterPro"/>
</dbReference>
<dbReference type="CDD" id="cd19423">
    <property type="entry name" value="lipocalin_LTBP1-like"/>
    <property type="match status" value="1"/>
</dbReference>
<dbReference type="Gene3D" id="2.40.128.20">
    <property type="match status" value="1"/>
</dbReference>
<dbReference type="InterPro" id="IPR012674">
    <property type="entry name" value="Calycin"/>
</dbReference>
<dbReference type="InterPro" id="IPR005657">
    <property type="entry name" value="Triabi/Procalin"/>
</dbReference>
<dbReference type="Pfam" id="PF03973">
    <property type="entry name" value="Triabin"/>
    <property type="match status" value="1"/>
</dbReference>
<dbReference type="SUPFAM" id="SSF50814">
    <property type="entry name" value="Lipocalins"/>
    <property type="match status" value="1"/>
</dbReference>
<sequence length="206" mass="23758">MKTILAVIFFGILAFAFADYPSIPKCTHPPAMANFNQKKFLEGKWYVTKAKHGSNSTVCREYRAKTKGNDQILVGDGYYSFNGGTFYFTVRCKRLPNKEVQKPLQFTCTQKSPDDPSKMFKFQLEVTILDTDYANYAVMYRCVQFPEELGSHFEDNTLLLHRKLDQLVDENLIERKLKLSLPSFKSRDDVVEGCRELPSKKKKTKP</sequence>
<name>TRIA1_TRIIF</name>
<proteinExistence type="evidence at protein level"/>
<comment type="function">
    <text evidence="3">Suppresses activation of the host plasma kallikrein-kinin system, leading to inhibition of the intrinsic coagulation pathway (PubMed:17645545). Blocks host coagulation factor XII (F12) and prekallikrein (KLKB1) reciprocal activation without affecting their amidolytic activities (PubMed:17645545). Blocks binding of host F12 and high molecular weight kininogen (KNG1) to negatively charged surfaces (PubMed:17645545). Attenuates generation of bradykinin by interfering with activation of host kallikrein-kinin system (PubMed:17645545).</text>
</comment>
<comment type="activity regulation">
    <text evidence="3">Zn(2+) modulates binding to host coagulation factor XII (F12) and high molecular weight kininogen (KNG1).</text>
</comment>
<comment type="subunit">
    <text evidence="3">Interacts with host coagulation factor XII (F12) (inactive and activated) (via amino acids 1-77) (PubMed:17645545). Interacts with host high molecular weight kininogen (KNG1) (via amino acids 402-532) (PubMed:17645545).</text>
</comment>
<comment type="subcellular location">
    <subcellularLocation>
        <location evidence="5">Secreted</location>
    </subcellularLocation>
</comment>
<comment type="tissue specificity">
    <text evidence="3">Salivary gland (at protein level).</text>
</comment>
<comment type="similarity">
    <text evidence="5">Belongs to the calycin superfamily. Triabin family.</text>
</comment>
<reference evidence="6" key="1">
    <citation type="journal article" date="2007" name="FEBS J.">
        <title>Identification and characterization of plasma kallikrein-kinin system inhibitors from salivary glands of the blood-sucking insect Triatoma infestans.</title>
        <authorList>
            <person name="Isawa H."/>
            <person name="Orito Y."/>
            <person name="Jingushi N."/>
            <person name="Iwanaga S."/>
            <person name="Morita A."/>
            <person name="Chinzei Y."/>
            <person name="Yuda M."/>
        </authorList>
    </citation>
    <scope>NUCLEOTIDE SEQUENCE [MRNA]</scope>
    <scope>FUNCTION</scope>
    <scope>ACTIVITY REGULATION</scope>
    <scope>INTERACTION WITH HOST F12 AND KNG1</scope>
    <scope>TISSUE SPECIFICITY</scope>
</reference>
<protein>
    <recommendedName>
        <fullName evidence="4">Triafestin-1</fullName>
    </recommendedName>
</protein>
<feature type="signal peptide" evidence="1">
    <location>
        <begin position="1"/>
        <end position="18"/>
    </location>
</feature>
<feature type="chain" id="PRO_5002707514" description="Triafestin-1" evidence="1">
    <location>
        <begin position="19"/>
        <end position="206"/>
    </location>
</feature>
<feature type="glycosylation site" description="N-linked (GlcNAc...) asparagine" evidence="2">
    <location>
        <position position="55"/>
    </location>
</feature>
<accession>A7BJ45</accession>